<evidence type="ECO:0000255" key="1">
    <source>
        <dbReference type="HAMAP-Rule" id="MF_01438"/>
    </source>
</evidence>
<evidence type="ECO:0000255" key="2">
    <source>
        <dbReference type="PROSITE-ProRule" id="PRU01130"/>
    </source>
</evidence>
<proteinExistence type="inferred from homology"/>
<reference key="1">
    <citation type="submission" date="2007-02" db="EMBL/GenBank/DDBJ databases">
        <title>Complete sequence of Clostridium thermocellum ATCC 27405.</title>
        <authorList>
            <consortium name="US DOE Joint Genome Institute"/>
            <person name="Copeland A."/>
            <person name="Lucas S."/>
            <person name="Lapidus A."/>
            <person name="Barry K."/>
            <person name="Detter J.C."/>
            <person name="Glavina del Rio T."/>
            <person name="Hammon N."/>
            <person name="Israni S."/>
            <person name="Dalin E."/>
            <person name="Tice H."/>
            <person name="Pitluck S."/>
            <person name="Chertkov O."/>
            <person name="Brettin T."/>
            <person name="Bruce D."/>
            <person name="Han C."/>
            <person name="Tapia R."/>
            <person name="Gilna P."/>
            <person name="Schmutz J."/>
            <person name="Larimer F."/>
            <person name="Land M."/>
            <person name="Hauser L."/>
            <person name="Kyrpides N."/>
            <person name="Mikhailova N."/>
            <person name="Wu J.H.D."/>
            <person name="Newcomb M."/>
            <person name="Richardson P."/>
        </authorList>
    </citation>
    <scope>NUCLEOTIDE SEQUENCE [LARGE SCALE GENOMIC DNA]</scope>
    <source>
        <strain>ATCC 27405 / DSM 1237 / JCM 9322 / NBRC 103400 / NCIMB 10682 / NRRL B-4536 / VPI 7372</strain>
    </source>
</reference>
<accession>A3DGC7</accession>
<protein>
    <recommendedName>
        <fullName evidence="1">DNA integrity scanning protein DisA</fullName>
    </recommendedName>
    <alternativeName>
        <fullName evidence="1">Cyclic di-AMP synthase</fullName>
        <shortName evidence="1">c-di-AMP synthase</shortName>
    </alternativeName>
    <alternativeName>
        <fullName evidence="1">Diadenylate cyclase</fullName>
        <ecNumber evidence="1">2.7.7.85</ecNumber>
    </alternativeName>
</protein>
<sequence length="360" mass="40518">MTGLDRKKDDEIIEVLRMMAPGTSLREGLDNILLARTGALIVIGDSEKVLSLVDGGFYINKDYTPAHIYELAKMDGAIILSKDLKKILYANALLVPDTSIPTAETGTRHKTADRVAKQTGEVVVSISQRRNIITIYMGSRKYILRETPVILAEANQALQTLEKYKVALVEAINNLNILEIEDIVTLDDVAFVLQRTEMLMRVAAEIERYISELGSEGRLISLQLDELLTNVDADELFIIEDYAIRTDLRSDEILEKLRQLSYDELMNLVNICSILGYSPNADAFEMVISPRGYRLLSKIPRVPVNIIRNLVKKFSNLQGILNASIEELDDVAGIGEVRARIIWDGLRRVQEQIFLDSRKL</sequence>
<comment type="function">
    <text evidence="1">Participates in a DNA-damage check-point that is active prior to asymmetric division when DNA is damaged. DisA forms globular foci that rapidly scan along the chromosomes during sporulation, searching for lesions. When a lesion is present, DisA pauses at the lesion site. This triggers a cellular response that culminates in a temporary block in sporulation initiation.</text>
</comment>
<comment type="function">
    <text evidence="1">Also has diadenylate cyclase activity, catalyzing the condensation of 2 ATP molecules into cyclic di-AMP (c-di-AMP). c-di-AMP acts as a signaling molecule that couples DNA integrity with progression of sporulation. The rise in c-di-AMP level generated by DisA while scanning the chromosome, operates as a positive signal that advances sporulation; upon encountering a lesion, the DisA focus arrests at the damaged site and halts c-di-AMP synthesis.</text>
</comment>
<comment type="catalytic activity">
    <reaction evidence="1">
        <text>2 ATP = 3',3'-c-di-AMP + 2 diphosphate</text>
        <dbReference type="Rhea" id="RHEA:35655"/>
        <dbReference type="ChEBI" id="CHEBI:30616"/>
        <dbReference type="ChEBI" id="CHEBI:33019"/>
        <dbReference type="ChEBI" id="CHEBI:71500"/>
        <dbReference type="EC" id="2.7.7.85"/>
    </reaction>
</comment>
<comment type="cofactor">
    <cofactor evidence="1">
        <name>Mg(2+)</name>
        <dbReference type="ChEBI" id="CHEBI:18420"/>
    </cofactor>
</comment>
<comment type="subunit">
    <text evidence="1">Homooctamer.</text>
</comment>
<comment type="similarity">
    <text evidence="1">Belongs to the DisA family.</text>
</comment>
<keyword id="KW-0067">ATP-binding</keyword>
<keyword id="KW-0227">DNA damage</keyword>
<keyword id="KW-0234">DNA repair</keyword>
<keyword id="KW-0238">DNA-binding</keyword>
<keyword id="KW-0460">Magnesium</keyword>
<keyword id="KW-0547">Nucleotide-binding</keyword>
<keyword id="KW-0548">Nucleotidyltransferase</keyword>
<keyword id="KW-1185">Reference proteome</keyword>
<keyword id="KW-0808">Transferase</keyword>
<dbReference type="EC" id="2.7.7.85" evidence="1"/>
<dbReference type="EMBL" id="CP000568">
    <property type="protein sequence ID" value="ABN53006.1"/>
    <property type="molecule type" value="Genomic_DNA"/>
</dbReference>
<dbReference type="RefSeq" id="WP_011838261.1">
    <property type="nucleotide sequence ID" value="NC_009012.1"/>
</dbReference>
<dbReference type="SMR" id="A3DGC7"/>
<dbReference type="STRING" id="203119.Cthe_1785"/>
<dbReference type="GeneID" id="35803247"/>
<dbReference type="KEGG" id="cth:Cthe_1785"/>
<dbReference type="eggNOG" id="COG1623">
    <property type="taxonomic scope" value="Bacteria"/>
</dbReference>
<dbReference type="HOGENOM" id="CLU_787128_0_0_9"/>
<dbReference type="OrthoDB" id="41841at2"/>
<dbReference type="Proteomes" id="UP000002145">
    <property type="component" value="Chromosome"/>
</dbReference>
<dbReference type="GO" id="GO:0004016">
    <property type="term" value="F:adenylate cyclase activity"/>
    <property type="evidence" value="ECO:0007669"/>
    <property type="project" value="TreeGrafter"/>
</dbReference>
<dbReference type="GO" id="GO:0005524">
    <property type="term" value="F:ATP binding"/>
    <property type="evidence" value="ECO:0007669"/>
    <property type="project" value="UniProtKB-UniRule"/>
</dbReference>
<dbReference type="GO" id="GO:0106408">
    <property type="term" value="F:diadenylate cyclase activity"/>
    <property type="evidence" value="ECO:0007669"/>
    <property type="project" value="UniProtKB-EC"/>
</dbReference>
<dbReference type="GO" id="GO:0003677">
    <property type="term" value="F:DNA binding"/>
    <property type="evidence" value="ECO:0007669"/>
    <property type="project" value="UniProtKB-UniRule"/>
</dbReference>
<dbReference type="GO" id="GO:0006281">
    <property type="term" value="P:DNA repair"/>
    <property type="evidence" value="ECO:0007669"/>
    <property type="project" value="UniProtKB-UniRule"/>
</dbReference>
<dbReference type="FunFam" id="3.40.1700.10:FF:000001">
    <property type="entry name" value="DNA integrity scanning protein DisA"/>
    <property type="match status" value="1"/>
</dbReference>
<dbReference type="Gene3D" id="1.10.150.20">
    <property type="entry name" value="5' to 3' exonuclease, C-terminal subdomain"/>
    <property type="match status" value="1"/>
</dbReference>
<dbReference type="Gene3D" id="1.20.1260.110">
    <property type="entry name" value="DNA integrity scanning linker region"/>
    <property type="match status" value="1"/>
</dbReference>
<dbReference type="Gene3D" id="3.40.1700.10">
    <property type="entry name" value="DNA integrity scanning protein, DisA, N-terminal domain"/>
    <property type="match status" value="1"/>
</dbReference>
<dbReference type="HAMAP" id="MF_01438">
    <property type="entry name" value="DisA"/>
    <property type="match status" value="1"/>
</dbReference>
<dbReference type="InterPro" id="IPR050338">
    <property type="entry name" value="DisA"/>
</dbReference>
<dbReference type="InterPro" id="IPR038331">
    <property type="entry name" value="DisA_sf"/>
</dbReference>
<dbReference type="InterPro" id="IPR036888">
    <property type="entry name" value="DNA_integrity_DisA_N_sf"/>
</dbReference>
<dbReference type="InterPro" id="IPR018906">
    <property type="entry name" value="DNA_integrity_scan_DisA_link"/>
</dbReference>
<dbReference type="InterPro" id="IPR003390">
    <property type="entry name" value="DNA_integrity_scan_DisA_N"/>
</dbReference>
<dbReference type="InterPro" id="IPR023763">
    <property type="entry name" value="DNA_integrity_scanning_protein"/>
</dbReference>
<dbReference type="InterPro" id="IPR010994">
    <property type="entry name" value="RuvA_2-like"/>
</dbReference>
<dbReference type="NCBIfam" id="NF010009">
    <property type="entry name" value="PRK13482.1"/>
    <property type="match status" value="1"/>
</dbReference>
<dbReference type="PANTHER" id="PTHR34185">
    <property type="entry name" value="DIADENYLATE CYCLASE"/>
    <property type="match status" value="1"/>
</dbReference>
<dbReference type="PANTHER" id="PTHR34185:SF3">
    <property type="entry name" value="DNA INTEGRITY SCANNING PROTEIN DISA"/>
    <property type="match status" value="1"/>
</dbReference>
<dbReference type="Pfam" id="PF02457">
    <property type="entry name" value="DAC"/>
    <property type="match status" value="1"/>
</dbReference>
<dbReference type="Pfam" id="PF10635">
    <property type="entry name" value="DisA-linker"/>
    <property type="match status" value="1"/>
</dbReference>
<dbReference type="SUPFAM" id="SSF47781">
    <property type="entry name" value="RuvA domain 2-like"/>
    <property type="match status" value="1"/>
</dbReference>
<dbReference type="SUPFAM" id="SSF143597">
    <property type="entry name" value="YojJ-like"/>
    <property type="match status" value="1"/>
</dbReference>
<dbReference type="PROSITE" id="PS51794">
    <property type="entry name" value="DAC"/>
    <property type="match status" value="1"/>
</dbReference>
<organism>
    <name type="scientific">Acetivibrio thermocellus (strain ATCC 27405 / DSM 1237 / JCM 9322 / NBRC 103400 / NCIMB 10682 / NRRL B-4536 / VPI 7372)</name>
    <name type="common">Clostridium thermocellum</name>
    <dbReference type="NCBI Taxonomy" id="203119"/>
    <lineage>
        <taxon>Bacteria</taxon>
        <taxon>Bacillati</taxon>
        <taxon>Bacillota</taxon>
        <taxon>Clostridia</taxon>
        <taxon>Eubacteriales</taxon>
        <taxon>Oscillospiraceae</taxon>
        <taxon>Acetivibrio</taxon>
    </lineage>
</organism>
<feature type="chain" id="PRO_1000017369" description="DNA integrity scanning protein DisA">
    <location>
        <begin position="1"/>
        <end position="360"/>
    </location>
</feature>
<feature type="domain" description="DAC" evidence="2">
    <location>
        <begin position="9"/>
        <end position="147"/>
    </location>
</feature>
<feature type="binding site" evidence="1">
    <location>
        <position position="76"/>
    </location>
    <ligand>
        <name>ATP</name>
        <dbReference type="ChEBI" id="CHEBI:30616"/>
    </ligand>
</feature>
<feature type="binding site" evidence="1">
    <location>
        <position position="94"/>
    </location>
    <ligand>
        <name>ATP</name>
        <dbReference type="ChEBI" id="CHEBI:30616"/>
    </ligand>
</feature>
<feature type="binding site" evidence="1">
    <location>
        <begin position="107"/>
        <end position="111"/>
    </location>
    <ligand>
        <name>ATP</name>
        <dbReference type="ChEBI" id="CHEBI:30616"/>
    </ligand>
</feature>
<gene>
    <name evidence="1" type="primary">disA</name>
    <name type="ordered locus">Cthe_1785</name>
</gene>
<name>DISA_ACET2</name>